<accession>P80822</accession>
<reference evidence="3" key="1">
    <citation type="journal article" date="1997" name="J. Biol. Chem.">
        <title>Differential extraction and protein sequencing reveals major differences in patterns of primary cell wall proteins from plants.</title>
        <authorList>
            <person name="Robertson D."/>
            <person name="Mitchell G.P."/>
            <person name="Gilroy J.S."/>
            <person name="Gerrish C."/>
            <person name="Bolwell G.P."/>
            <person name="Slabas A.R."/>
        </authorList>
    </citation>
    <scope>PROTEIN SEQUENCE</scope>
    <scope>SUBCELLULAR LOCATION</scope>
</reference>
<feature type="chain" id="PRO_0000079706" description="20 kDa cell wall protein">
    <location>
        <begin position="1"/>
        <end position="10" status="greater than"/>
    </location>
</feature>
<feature type="non-terminal residue" evidence="2">
    <location>
        <position position="10"/>
    </location>
</feature>
<name>CWP26_SOLLC</name>
<organism>
    <name type="scientific">Solanum lycopersicum</name>
    <name type="common">Tomato</name>
    <name type="synonym">Lycopersicon esculentum</name>
    <dbReference type="NCBI Taxonomy" id="4081"/>
    <lineage>
        <taxon>Eukaryota</taxon>
        <taxon>Viridiplantae</taxon>
        <taxon>Streptophyta</taxon>
        <taxon>Embryophyta</taxon>
        <taxon>Tracheophyta</taxon>
        <taxon>Spermatophyta</taxon>
        <taxon>Magnoliopsida</taxon>
        <taxon>eudicotyledons</taxon>
        <taxon>Gunneridae</taxon>
        <taxon>Pentapetalae</taxon>
        <taxon>asterids</taxon>
        <taxon>lamiids</taxon>
        <taxon>Solanales</taxon>
        <taxon>Solanaceae</taxon>
        <taxon>Solanoideae</taxon>
        <taxon>Solaneae</taxon>
        <taxon>Solanum</taxon>
        <taxon>Solanum subgen. Lycopersicon</taxon>
    </lineage>
</organism>
<protein>
    <recommendedName>
        <fullName>20 kDa cell wall protein</fullName>
    </recommendedName>
</protein>
<keyword id="KW-0134">Cell wall</keyword>
<keyword id="KW-0903">Direct protein sequencing</keyword>
<keyword id="KW-1185">Reference proteome</keyword>
<keyword id="KW-0964">Secreted</keyword>
<dbReference type="InParanoid" id="P80822"/>
<dbReference type="Proteomes" id="UP000004994">
    <property type="component" value="Unplaced"/>
</dbReference>
<dbReference type="GO" id="GO:0005576">
    <property type="term" value="C:extracellular region"/>
    <property type="evidence" value="ECO:0007669"/>
    <property type="project" value="UniProtKB-KW"/>
</dbReference>
<proteinExistence type="evidence at protein level"/>
<sequence length="10" mass="1333">EYIPFIHEWV</sequence>
<evidence type="ECO:0000269" key="1">
    <source>
    </source>
</evidence>
<evidence type="ECO:0000303" key="2">
    <source>
    </source>
</evidence>
<evidence type="ECO:0000305" key="3"/>
<comment type="subcellular location">
    <subcellularLocation>
        <location evidence="1">Secreted</location>
        <location evidence="1">Cell wall</location>
    </subcellularLocation>
</comment>